<reference key="1">
    <citation type="journal article" date="2000" name="Nucleic Acids Res.">
        <title>Genome sequences of Chlamydia trachomatis MoPn and Chlamydia pneumoniae AR39.</title>
        <authorList>
            <person name="Read T.D."/>
            <person name="Brunham R.C."/>
            <person name="Shen C."/>
            <person name="Gill S.R."/>
            <person name="Heidelberg J.F."/>
            <person name="White O."/>
            <person name="Hickey E.K."/>
            <person name="Peterson J.D."/>
            <person name="Utterback T.R."/>
            <person name="Berry K.J."/>
            <person name="Bass S."/>
            <person name="Linher K.D."/>
            <person name="Weidman J.F."/>
            <person name="Khouri H.M."/>
            <person name="Craven B."/>
            <person name="Bowman C."/>
            <person name="Dodson R.J."/>
            <person name="Gwinn M.L."/>
            <person name="Nelson W.C."/>
            <person name="DeBoy R.T."/>
            <person name="Kolonay J.F."/>
            <person name="McClarty G."/>
            <person name="Salzberg S.L."/>
            <person name="Eisen J.A."/>
            <person name="Fraser C.M."/>
        </authorList>
    </citation>
    <scope>NUCLEOTIDE SEQUENCE [LARGE SCALE GENOMIC DNA]</scope>
    <source>
        <strain>MoPn / Nigg</strain>
    </source>
</reference>
<comment type="function">
    <text evidence="1">NQR complex catalyzes the reduction of ubiquinone-1 to ubiquinol by two successive reactions, coupled with the transport of Na(+) ions from the cytoplasm to the periplasm. NqrA to NqrE are probably involved in the second step, the conversion of ubisemiquinone to ubiquinol.</text>
</comment>
<comment type="catalytic activity">
    <reaction evidence="1">
        <text>a ubiquinone + n Na(+)(in) + NADH + H(+) = a ubiquinol + n Na(+)(out) + NAD(+)</text>
        <dbReference type="Rhea" id="RHEA:47748"/>
        <dbReference type="Rhea" id="RHEA-COMP:9565"/>
        <dbReference type="Rhea" id="RHEA-COMP:9566"/>
        <dbReference type="ChEBI" id="CHEBI:15378"/>
        <dbReference type="ChEBI" id="CHEBI:16389"/>
        <dbReference type="ChEBI" id="CHEBI:17976"/>
        <dbReference type="ChEBI" id="CHEBI:29101"/>
        <dbReference type="ChEBI" id="CHEBI:57540"/>
        <dbReference type="ChEBI" id="CHEBI:57945"/>
        <dbReference type="EC" id="7.2.1.1"/>
    </reaction>
</comment>
<comment type="cofactor">
    <cofactor evidence="1">
        <name>FMN</name>
        <dbReference type="ChEBI" id="CHEBI:58210"/>
    </cofactor>
</comment>
<comment type="subunit">
    <text evidence="1">Composed of six subunits; NqrA, NqrB, NqrC, NqrD, NqrE and NqrF.</text>
</comment>
<comment type="subcellular location">
    <subcellularLocation>
        <location evidence="1">Cell inner membrane</location>
        <topology evidence="1">Single-pass membrane protein</topology>
    </subcellularLocation>
</comment>
<comment type="similarity">
    <text evidence="1">Belongs to the NqrC family.</text>
</comment>
<protein>
    <recommendedName>
        <fullName evidence="1">Na(+)-translocating NADH-quinone reductase subunit C</fullName>
        <shortName evidence="1">Na(+)-NQR subunit C</shortName>
        <shortName evidence="1">Na(+)-translocating NQR subunit C</shortName>
        <ecNumber evidence="1">7.2.1.1</ecNumber>
    </recommendedName>
    <alternativeName>
        <fullName evidence="1">NQR complex subunit C</fullName>
    </alternativeName>
    <alternativeName>
        <fullName evidence="1">NQR-1 subunit C</fullName>
    </alternativeName>
</protein>
<keyword id="KW-0997">Cell inner membrane</keyword>
<keyword id="KW-1003">Cell membrane</keyword>
<keyword id="KW-0285">Flavoprotein</keyword>
<keyword id="KW-0288">FMN</keyword>
<keyword id="KW-0406">Ion transport</keyword>
<keyword id="KW-0472">Membrane</keyword>
<keyword id="KW-0520">NAD</keyword>
<keyword id="KW-0597">Phosphoprotein</keyword>
<keyword id="KW-0915">Sodium</keyword>
<keyword id="KW-0739">Sodium transport</keyword>
<keyword id="KW-1278">Translocase</keyword>
<keyword id="KW-0812">Transmembrane</keyword>
<keyword id="KW-1133">Transmembrane helix</keyword>
<keyword id="KW-0813">Transport</keyword>
<keyword id="KW-0830">Ubiquinone</keyword>
<accession>Q9PKB5</accession>
<organism>
    <name type="scientific">Chlamydia muridarum (strain MoPn / Nigg)</name>
    <dbReference type="NCBI Taxonomy" id="243161"/>
    <lineage>
        <taxon>Bacteria</taxon>
        <taxon>Pseudomonadati</taxon>
        <taxon>Chlamydiota</taxon>
        <taxon>Chlamydiia</taxon>
        <taxon>Chlamydiales</taxon>
        <taxon>Chlamydiaceae</taxon>
        <taxon>Chlamydia/Chlamydophila group</taxon>
        <taxon>Chlamydia</taxon>
    </lineage>
</organism>
<feature type="chain" id="PRO_0000214212" description="Na(+)-translocating NADH-quinone reductase subunit C">
    <location>
        <begin position="1"/>
        <end position="318"/>
    </location>
</feature>
<feature type="transmembrane region" description="Helical" evidence="1">
    <location>
        <begin position="13"/>
        <end position="33"/>
    </location>
</feature>
<feature type="modified residue" description="FMN phosphoryl threonine" evidence="1">
    <location>
        <position position="281"/>
    </location>
</feature>
<sequence>MASKSRHYLNQPWYIILFIFVLSLVAGTLLSSVSYVLSPIQKQAAEFDRNQQMLMAAQIISYDNKFQIYAEGDWQPAVYNTKKQILEKSSSTPPQVTVATLCSYFQNFVRVLLTDSQGNLSSFEDHNLNLEEFLSHPTSSVQDHSLHVIYAILANDESSKKLSSSQVAKNPVSIESIILPIKGFGLWGPIYGFLALEKDGNTVLGTCWYQHGETPGLGANITNPQWQQNFRGKKVFLASSSGETDFAKTTLGLEVIKGSVSALLGDSPKANSAVDGISGATLTCNGVTEAFANSLAPYRPLLTFFANLNSSGESHDNQ</sequence>
<dbReference type="EC" id="7.2.1.1" evidence="1"/>
<dbReference type="EMBL" id="AE002160">
    <property type="protein sequence ID" value="AAF39390.1"/>
    <property type="molecule type" value="Genomic_DNA"/>
</dbReference>
<dbReference type="PIR" id="C81690">
    <property type="entry name" value="C81690"/>
</dbReference>
<dbReference type="RefSeq" id="WP_010230817.1">
    <property type="nucleotide sequence ID" value="NZ_CP063055.1"/>
</dbReference>
<dbReference type="SMR" id="Q9PKB5"/>
<dbReference type="GeneID" id="1245911"/>
<dbReference type="KEGG" id="cmu:TC_0551"/>
<dbReference type="eggNOG" id="COG2869">
    <property type="taxonomic scope" value="Bacteria"/>
</dbReference>
<dbReference type="HOGENOM" id="CLU_870677_0_0_0"/>
<dbReference type="OrthoDB" id="9794010at2"/>
<dbReference type="Proteomes" id="UP000000800">
    <property type="component" value="Chromosome"/>
</dbReference>
<dbReference type="GO" id="GO:0005886">
    <property type="term" value="C:plasma membrane"/>
    <property type="evidence" value="ECO:0007669"/>
    <property type="project" value="UniProtKB-SubCell"/>
</dbReference>
<dbReference type="GO" id="GO:0010181">
    <property type="term" value="F:FMN binding"/>
    <property type="evidence" value="ECO:0007669"/>
    <property type="project" value="UniProtKB-UniRule"/>
</dbReference>
<dbReference type="GO" id="GO:0016655">
    <property type="term" value="F:oxidoreductase activity, acting on NAD(P)H, quinone or similar compound as acceptor"/>
    <property type="evidence" value="ECO:0007669"/>
    <property type="project" value="UniProtKB-UniRule"/>
</dbReference>
<dbReference type="GO" id="GO:0006814">
    <property type="term" value="P:sodium ion transport"/>
    <property type="evidence" value="ECO:0007669"/>
    <property type="project" value="UniProtKB-UniRule"/>
</dbReference>
<dbReference type="HAMAP" id="MF_00427">
    <property type="entry name" value="NqrC"/>
    <property type="match status" value="1"/>
</dbReference>
<dbReference type="InterPro" id="IPR007329">
    <property type="entry name" value="FMN-bd"/>
</dbReference>
<dbReference type="InterPro" id="IPR010204">
    <property type="entry name" value="NqrC"/>
</dbReference>
<dbReference type="NCBIfam" id="TIGR01938">
    <property type="entry name" value="nqrC"/>
    <property type="match status" value="1"/>
</dbReference>
<dbReference type="NCBIfam" id="NF003752">
    <property type="entry name" value="PRK05346.2-3"/>
    <property type="match status" value="1"/>
</dbReference>
<dbReference type="PANTHER" id="PTHR37838">
    <property type="entry name" value="NA(+)-TRANSLOCATING NADH-QUINONE REDUCTASE SUBUNIT C"/>
    <property type="match status" value="1"/>
</dbReference>
<dbReference type="PANTHER" id="PTHR37838:SF1">
    <property type="entry name" value="NA(+)-TRANSLOCATING NADH-QUINONE REDUCTASE SUBUNIT C"/>
    <property type="match status" value="1"/>
</dbReference>
<dbReference type="Pfam" id="PF04205">
    <property type="entry name" value="FMN_bind"/>
    <property type="match status" value="1"/>
</dbReference>
<dbReference type="PIRSF" id="PIRSF009437">
    <property type="entry name" value="NQR-1_subunit_C"/>
    <property type="match status" value="1"/>
</dbReference>
<dbReference type="SMART" id="SM00900">
    <property type="entry name" value="FMN_bind"/>
    <property type="match status" value="1"/>
</dbReference>
<proteinExistence type="inferred from homology"/>
<evidence type="ECO:0000255" key="1">
    <source>
        <dbReference type="HAMAP-Rule" id="MF_00427"/>
    </source>
</evidence>
<gene>
    <name evidence="1" type="primary">nqrC</name>
    <name type="ordered locus">TC_0551</name>
</gene>
<name>NQRC_CHLMU</name>